<comment type="function">
    <text evidence="7 9 11 12 14">Required for normal developmental progression throughout all life stages (PubMed:18262516, PubMed:22466039). Specifically required for the molt stage during all larval transitions and morphogenesis (PubMed:17267616, PubMed:18262516, PubMed:22466039). Acts with heterochronic genes, including members of the let-7 family, to regulate larval stage to adult transition (PubMed:18262516, PubMed:28933985). Acts synergistically with acn-1 in let-7 regulated postembryonic cell division of hypodermal seam cells (PubMed:28933985). Acts in multiple pathways to influence daf-12 and daf-16 activity to in turn regulate physiological and reproductive processes such as body size and egg-laying (PubMed:22466039). May play a role in neurotransmission (PubMed:20862215).</text>
</comment>
<comment type="subunit">
    <text evidence="6">Interacts (via cytoplasmic domain) with feh-1 (via PID 2 domain).</text>
</comment>
<comment type="subcellular location">
    <subcellularLocation>
        <location evidence="15">Membrane</location>
        <topology evidence="15">Single-pass type I membrane protein</topology>
    </subcellularLocation>
    <subcellularLocation>
        <location evidence="11">Early endosome</location>
    </subcellularLocation>
</comment>
<comment type="alternative products">
    <event type="alternative splicing"/>
    <isoform>
        <id>Q10651-1</id>
        <name>a</name>
        <sequence type="displayed"/>
    </isoform>
    <isoform>
        <id>Q10651-2</id>
        <name>b</name>
        <sequence type="described" ref="VSP_000017"/>
    </isoform>
</comment>
<comment type="tissue specificity">
    <text evidence="7 11">Expressed in the head, pharynx, spermatheca, uterus, vulva, tail and ventral neurons (PubMed:18262516). Specifically expressed in nerve ring interneurons, the ventral cord, socket and amphids in the head, with strong expression in junctional cells, including the pharyngeal intestinal valve and uterine seam junction, and the excretory cell and weak expression in epidermal epithelial cells, including hyp7 cells, vulval cells, rectal valve cells, pharyngeal arcade cells and the tail hypodermis (PubMed:20862215).</text>
</comment>
<comment type="developmental stage">
    <text evidence="7 9 14">Similar expression pattern in larval and adult cells with expression in neuronal, muscle, hypodermal and supporting cells (PubMed:17267616). Temporally expressed in seam cells from the middle of larval stage L4 and throughout adult stages (PubMed:18262516, PubMed:28933985).</text>
</comment>
<comment type="domain">
    <text evidence="2">The NPXY motif mediates the interaction with clathrin.</text>
</comment>
<comment type="PTM">
    <text evidence="7">Extracellular region is proteolytically cleaved.</text>
</comment>
<comment type="disruption phenotype">
    <text evidence="6 7 9 11 14">Larval lethality during the L1 stage, with the formation of vacuoles in syncytial hypoderm, organ morphology defects, and molting defects (PubMed:17267616, PubMed:20862215). RNAi-mediated knockdown results in a reduced body size, transparent appearance, sluggish movement and insensitivity to touch (PubMed:18262516, PubMed:20862215). Delayed development and a molting defect that begins at the L3 to L4 larval stage transition and continues through to transition from the L4 larval stage to the young adult stage (PubMed:20862215). Increased sensitivity to acetylcholine inhibition (PubMed:20862215). Increased pharyngeal pumping (PubMed:11896189). In a let-7 mutant background, partial suppression of the let-7 bursting vulva phenotype (PubMed:28933985). Double RNAi-mediated knockdown with acn-1 in a let-7 mutant background leads to complete suppression of the heterochronic seam cell defects (PubMed:28933985).</text>
</comment>
<comment type="miscellaneous">
    <text evidence="13">Lacks conserved metal-binding sites and has only weak affinity for copper in vitro.</text>
</comment>
<comment type="similarity">
    <text evidence="3">Belongs to the APP family.</text>
</comment>
<comment type="sequence caution" evidence="15">
    <conflict type="erroneous initiation">
        <sequence resource="EMBL-CDS" id="AAC46470"/>
    </conflict>
</comment>
<reference key="1">
    <citation type="journal article" date="1998" name="Science">
        <title>Genome sequence of the nematode C. elegans: a platform for investigating biology.</title>
        <authorList>
            <consortium name="The C. elegans sequencing consortium"/>
        </authorList>
    </citation>
    <scope>NUCLEOTIDE SEQUENCE [LARGE SCALE GENOMIC DNA]</scope>
    <source>
        <strain>Bristol N2</strain>
    </source>
</reference>
<reference key="2">
    <citation type="journal article" date="1993" name="Proc. Natl. Acad. Sci. U.S.A.">
        <title>apl-1, a Caenorhabditis elegans gene encoding a protein related to the human beta-amyloid protein precursor.</title>
        <authorList>
            <person name="Daigle I."/>
            <person name="Li C."/>
        </authorList>
    </citation>
    <scope>NUCLEOTIDE SEQUENCE [MRNA] OF 6-686</scope>
    <source>
        <strain>Bristol N2</strain>
    </source>
</reference>
<reference key="3">
    <citation type="journal article" date="2002" name="J. Cell Sci.">
        <title>feh-1 and apl-1, the Caenorhabditis elegans orthologues of mammalian Fe65 and beta-amyloid precursor protein genes, are involved in the same pathway that controls nematode pharyngeal pumping.</title>
        <authorList>
            <person name="Zambrano N."/>
            <person name="Bimonte M."/>
            <person name="Arbucci S."/>
            <person name="Gianni D."/>
            <person name="Russo T."/>
            <person name="Bazzicalupo P."/>
        </authorList>
    </citation>
    <scope>INTERACTION WITH FEH-1</scope>
    <scope>DISRUPTION PHENOTYPE</scope>
</reference>
<reference key="4">
    <citation type="journal article" date="2007" name="Mol. Cell. Proteomics">
        <title>Proteomics reveals N-linked glycoprotein diversity in Caenorhabditis elegans and suggests an atypical translocation mechanism for integral membrane proteins.</title>
        <authorList>
            <person name="Kaji H."/>
            <person name="Kamiie J."/>
            <person name="Kawakami H."/>
            <person name="Kido K."/>
            <person name="Yamauchi Y."/>
            <person name="Shinkawa T."/>
            <person name="Taoka M."/>
            <person name="Takahashi N."/>
            <person name="Isobe T."/>
        </authorList>
    </citation>
    <scope>GLYCOSYLATION [LARGE SCALE ANALYSIS] AT ASN-249</scope>
    <scope>IDENTIFICATION BY MASS SPECTROMETRY</scope>
    <source>
        <strain>Bristol N2</strain>
    </source>
</reference>
<reference key="5">
    <citation type="journal article" date="2007" name="Proc. Natl. Acad. Sci. U.S.A.">
        <title>APL-1, a Caenorhabditis elegans protein related to the human beta-amyloid precursor protein, is essential for viability.</title>
        <authorList>
            <person name="Hornsten A."/>
            <person name="Lieberthal J."/>
            <person name="Fadia S."/>
            <person name="Malins R."/>
            <person name="Ha L."/>
            <person name="Xu X."/>
            <person name="Daigle I."/>
            <person name="Markowitz M."/>
            <person name="O'Connor G."/>
            <person name="Plasterk R."/>
            <person name="Li C."/>
        </authorList>
    </citation>
    <scope>FUNCTION</scope>
    <scope>TISSUE SPECIFICITY</scope>
    <scope>PROTEOLYTIC CLEAVAGE</scope>
    <scope>DISRUPTION PHENOTYPE</scope>
    <scope>MUTAGENESIS OF GLU-377</scope>
</reference>
<reference key="6">
    <citation type="journal article" date="2008" name="Dev. Biol.">
        <title>The expression of the Alzheimer's amyloid precursor protein-like gene is regulated by developmental timing microRNAs and their targets in Caenorhabditis elegans.</title>
        <authorList>
            <person name="Niwa R."/>
            <person name="Zhou F."/>
            <person name="Li C."/>
            <person name="Slack F.J."/>
        </authorList>
    </citation>
    <scope>FUNCTION</scope>
    <scope>TISSUE SPECIFICITY</scope>
    <scope>DEVELOPMENTAL STAGE</scope>
    <scope>DISRUPTION PHENOTYPE</scope>
</reference>
<reference key="7">
    <citation type="journal article" date="2010" name="PLoS ONE">
        <title>Intracellular trafficking and synaptic function of APL-1 in Caenorhabditis elegans.</title>
        <authorList>
            <person name="Wiese M."/>
            <person name="Antebi A."/>
            <person name="Zheng H."/>
        </authorList>
    </citation>
    <scope>FUNCTION</scope>
    <scope>SUBCELLULAR LOCATION</scope>
    <scope>TISSUE SPECIFICITY</scope>
    <scope>DISRUPTION PHENOTYPE</scope>
</reference>
<reference key="8">
    <citation type="journal article" date="2012" name="Genetics">
        <title>APL-1, the Alzheimer's Amyloid precursor protein in Caenorhabditis elegans, modulates multiple metabolic pathways throughout development.</title>
        <authorList>
            <person name="Ewald C.Y."/>
            <person name="Raps D.A."/>
            <person name="Li C."/>
        </authorList>
    </citation>
    <scope>FUNCTION</scope>
</reference>
<reference key="9">
    <citation type="journal article" date="2017" name="Cell Cycle">
        <title>acn-1, a C. elegans homologue of ACE, genetically interacts with the let-7 microRNA and other heterochronic genes.</title>
        <authorList>
            <person name="Metheetrairut C."/>
            <person name="Ahuja Y."/>
            <person name="Slack F.J."/>
        </authorList>
    </citation>
    <scope>FUNCTION</scope>
    <scope>DEVELOPMENTAL STAGE</scope>
    <scope>DISRUPTION PHENOTYPE</scope>
</reference>
<reference key="10">
    <citation type="journal article" date="2010" name="J. Biol. Chem.">
        <title>Structural characterization of the E2 domain of APL-1, a Caenorhabditis elegans homolog of human amyloid precursor protein, and its heparin binding site.</title>
        <authorList>
            <person name="Hoopes J.T."/>
            <person name="Liu X."/>
            <person name="Xu X."/>
            <person name="Demeler B."/>
            <person name="Folta-Stogniew E."/>
            <person name="Li C."/>
            <person name="Ha Y."/>
        </authorList>
    </citation>
    <scope>X-RAY CRYSTALLOGRAPHY (2.7 ANGSTROMS) OF 240-478 IN COMPLEX WITH HEPARIN ANALOG</scope>
    <scope>MUTAGENESIS OF ASN-252; HIS-254; ASP-348; SER-368; ARG-374; GLU-377; LYS-378 AND HIS-382</scope>
</reference>
<reference key="11">
    <citation type="journal article" date="2014" name="Metallomics">
        <title>Quantification of copper binding to amyloid precursor protein domain 2 and its Caenorhabditis elegans ortholog. Implications for biological function.</title>
        <authorList>
            <person name="Leong S.L."/>
            <person name="Young T.R."/>
            <person name="Barnham K.J."/>
            <person name="Wedd A.G."/>
            <person name="Hinds M.G."/>
            <person name="Xiao Z."/>
            <person name="Cappai R."/>
        </authorList>
    </citation>
    <scope>STRUCTURE BY NMR OF 135-197</scope>
    <scope>DISULFIDE BONDS</scope>
    <scope>LACK OF COPPER-BINDING</scope>
</reference>
<evidence type="ECO:0000250" key="1">
    <source>
        <dbReference type="UniProtKB" id="P05067"/>
    </source>
</evidence>
<evidence type="ECO:0000255" key="2"/>
<evidence type="ECO:0000255" key="3">
    <source>
        <dbReference type="PROSITE-ProRule" id="PRU01217"/>
    </source>
</evidence>
<evidence type="ECO:0000255" key="4">
    <source>
        <dbReference type="PROSITE-ProRule" id="PRU01218"/>
    </source>
</evidence>
<evidence type="ECO:0000256" key="5">
    <source>
        <dbReference type="SAM" id="MobiDB-lite"/>
    </source>
</evidence>
<evidence type="ECO:0000269" key="6">
    <source>
    </source>
</evidence>
<evidence type="ECO:0000269" key="7">
    <source>
    </source>
</evidence>
<evidence type="ECO:0000269" key="8">
    <source>
    </source>
</evidence>
<evidence type="ECO:0000269" key="9">
    <source>
    </source>
</evidence>
<evidence type="ECO:0000269" key="10">
    <source>
    </source>
</evidence>
<evidence type="ECO:0000269" key="11">
    <source>
    </source>
</evidence>
<evidence type="ECO:0000269" key="12">
    <source>
    </source>
</evidence>
<evidence type="ECO:0000269" key="13">
    <source>
    </source>
</evidence>
<evidence type="ECO:0000269" key="14">
    <source>
    </source>
</evidence>
<evidence type="ECO:0000305" key="15"/>
<evidence type="ECO:0000312" key="16">
    <source>
        <dbReference type="WormBase" id="C42D8.8a"/>
    </source>
</evidence>
<evidence type="ECO:0007829" key="17">
    <source>
        <dbReference type="PDB" id="2M05"/>
    </source>
</evidence>
<evidence type="ECO:0007829" key="18">
    <source>
        <dbReference type="PDB" id="3K66"/>
    </source>
</evidence>
<evidence type="ECO:0007829" key="19">
    <source>
        <dbReference type="PDB" id="3K6B"/>
    </source>
</evidence>
<gene>
    <name evidence="16" type="primary">apl-1</name>
    <name evidence="16" type="ORF">C42D8.8</name>
</gene>
<accession>Q10651</accession>
<accession>Q18583</accession>
<accession>Q95ZX1</accession>
<name>A4_CAEEL</name>
<organism>
    <name type="scientific">Caenorhabditis elegans</name>
    <dbReference type="NCBI Taxonomy" id="6239"/>
    <lineage>
        <taxon>Eukaryota</taxon>
        <taxon>Metazoa</taxon>
        <taxon>Ecdysozoa</taxon>
        <taxon>Nematoda</taxon>
        <taxon>Chromadorea</taxon>
        <taxon>Rhabditida</taxon>
        <taxon>Rhabditina</taxon>
        <taxon>Rhabditomorpha</taxon>
        <taxon>Rhabditoidea</taxon>
        <taxon>Rhabditidae</taxon>
        <taxon>Peloderinae</taxon>
        <taxon>Caenorhabditis</taxon>
    </lineage>
</organism>
<proteinExistence type="evidence at protein level"/>
<protein>
    <recommendedName>
        <fullName evidence="15">Amyloid-beta-like protein</fullName>
    </recommendedName>
</protein>
<dbReference type="EMBL" id="FO080659">
    <property type="protein sequence ID" value="CCD65568.1"/>
    <property type="molecule type" value="Genomic_DNA"/>
</dbReference>
<dbReference type="EMBL" id="FO080659">
    <property type="protein sequence ID" value="CCD65569.1"/>
    <property type="molecule type" value="Genomic_DNA"/>
</dbReference>
<dbReference type="EMBL" id="U00240">
    <property type="protein sequence ID" value="AAC46470.1"/>
    <property type="status" value="ALT_INIT"/>
    <property type="molecule type" value="mRNA"/>
</dbReference>
<dbReference type="PIR" id="T15795">
    <property type="entry name" value="T15795"/>
</dbReference>
<dbReference type="RefSeq" id="NP_508870.3">
    <molecule id="Q10651-1"/>
    <property type="nucleotide sequence ID" value="NM_076469.5"/>
</dbReference>
<dbReference type="RefSeq" id="NP_508871.1">
    <molecule id="Q10651-2"/>
    <property type="nucleotide sequence ID" value="NM_076470.8"/>
</dbReference>
<dbReference type="PDB" id="2M05">
    <property type="method" value="NMR"/>
    <property type="chains" value="A=135-197"/>
</dbReference>
<dbReference type="PDB" id="3K66">
    <property type="method" value="X-ray"/>
    <property type="resolution" value="2.70 A"/>
    <property type="chains" value="A=240-478"/>
</dbReference>
<dbReference type="PDB" id="3K6B">
    <property type="method" value="X-ray"/>
    <property type="resolution" value="2.80 A"/>
    <property type="chains" value="A=240-478"/>
</dbReference>
<dbReference type="PDBsum" id="2M05"/>
<dbReference type="PDBsum" id="3K66"/>
<dbReference type="PDBsum" id="3K6B"/>
<dbReference type="BMRB" id="Q10651"/>
<dbReference type="SMR" id="Q10651"/>
<dbReference type="BioGRID" id="45718">
    <property type="interactions" value="4"/>
</dbReference>
<dbReference type="DIP" id="DIP-25431N"/>
<dbReference type="FunCoup" id="Q10651">
    <property type="interactions" value="1399"/>
</dbReference>
<dbReference type="STRING" id="6239.C42D8.8a.1"/>
<dbReference type="GlyCosmos" id="Q10651">
    <property type="glycosylation" value="4 sites, No reported glycans"/>
</dbReference>
<dbReference type="iPTMnet" id="Q10651"/>
<dbReference type="PaxDb" id="6239-C42D8.8a"/>
<dbReference type="PeptideAtlas" id="Q10651"/>
<dbReference type="EnsemblMetazoa" id="C42D8.8a.1">
    <molecule id="Q10651-1"/>
    <property type="protein sequence ID" value="C42D8.8a.1"/>
    <property type="gene ID" value="WBGene00000149"/>
</dbReference>
<dbReference type="EnsemblMetazoa" id="C42D8.8b.1">
    <molecule id="Q10651-2"/>
    <property type="protein sequence ID" value="C42D8.8b.1"/>
    <property type="gene ID" value="WBGene00000149"/>
</dbReference>
<dbReference type="GeneID" id="180783"/>
<dbReference type="KEGG" id="cel:CELE_C42D8.8"/>
<dbReference type="UCSC" id="C42D8.8a">
    <molecule id="Q10651-1"/>
    <property type="organism name" value="c. elegans"/>
</dbReference>
<dbReference type="AGR" id="WB:WBGene00000149"/>
<dbReference type="CTD" id="180783"/>
<dbReference type="WormBase" id="C42D8.8a">
    <molecule id="Q10651-1"/>
    <property type="protein sequence ID" value="CE04209"/>
    <property type="gene ID" value="WBGene00000149"/>
    <property type="gene designation" value="apl-1"/>
</dbReference>
<dbReference type="WormBase" id="C42D8.8b">
    <molecule id="Q10651-2"/>
    <property type="protein sequence ID" value="CE27845"/>
    <property type="gene ID" value="WBGene00000149"/>
    <property type="gene designation" value="apl-1"/>
</dbReference>
<dbReference type="eggNOG" id="KOG3540">
    <property type="taxonomic scope" value="Eukaryota"/>
</dbReference>
<dbReference type="GeneTree" id="ENSGT00530000063252"/>
<dbReference type="InParanoid" id="Q10651"/>
<dbReference type="OMA" id="ANWTNEH"/>
<dbReference type="OrthoDB" id="6147836at2759"/>
<dbReference type="PhylomeDB" id="Q10651"/>
<dbReference type="Reactome" id="R-CEL-114608">
    <property type="pathway name" value="Platelet degranulation"/>
</dbReference>
<dbReference type="Reactome" id="R-CEL-3000178">
    <property type="pathway name" value="ECM proteoglycans"/>
</dbReference>
<dbReference type="Reactome" id="R-CEL-381426">
    <property type="pathway name" value="Regulation of Insulin-like Growth Factor (IGF) transport and uptake by Insulin-like Growth Factor Binding Proteins (IGFBPs)"/>
</dbReference>
<dbReference type="Reactome" id="R-CEL-416476">
    <property type="pathway name" value="G alpha (q) signalling events"/>
</dbReference>
<dbReference type="Reactome" id="R-CEL-8957275">
    <property type="pathway name" value="Post-translational protein phosphorylation"/>
</dbReference>
<dbReference type="Reactome" id="R-CEL-9609523">
    <property type="pathway name" value="Insertion of tail-anchored proteins into the endoplasmic reticulum membrane"/>
</dbReference>
<dbReference type="EvolutionaryTrace" id="Q10651"/>
<dbReference type="PRO" id="PR:Q10651"/>
<dbReference type="Proteomes" id="UP000001940">
    <property type="component" value="Chromosome X"/>
</dbReference>
<dbReference type="Bgee" id="WBGene00000149">
    <property type="expression patterns" value="Expressed in pharyngeal muscle cell (C elegans) and 3 other cell types or tissues"/>
</dbReference>
<dbReference type="GO" id="GO:0031410">
    <property type="term" value="C:cytoplasmic vesicle"/>
    <property type="evidence" value="ECO:0000314"/>
    <property type="project" value="WormBase"/>
</dbReference>
<dbReference type="GO" id="GO:0005769">
    <property type="term" value="C:early endosome"/>
    <property type="evidence" value="ECO:0007669"/>
    <property type="project" value="UniProtKB-SubCell"/>
</dbReference>
<dbReference type="GO" id="GO:0016020">
    <property type="term" value="C:membrane"/>
    <property type="evidence" value="ECO:0007669"/>
    <property type="project" value="UniProtKB-SubCell"/>
</dbReference>
<dbReference type="GO" id="GO:0043005">
    <property type="term" value="C:neuron projection"/>
    <property type="evidence" value="ECO:0000314"/>
    <property type="project" value="WormBase"/>
</dbReference>
<dbReference type="GO" id="GO:0043025">
    <property type="term" value="C:neuronal cell body"/>
    <property type="evidence" value="ECO:0000314"/>
    <property type="project" value="WormBase"/>
</dbReference>
<dbReference type="GO" id="GO:0008201">
    <property type="term" value="F:heparin binding"/>
    <property type="evidence" value="ECO:0007669"/>
    <property type="project" value="InterPro"/>
</dbReference>
<dbReference type="GO" id="GO:0046914">
    <property type="term" value="F:transition metal ion binding"/>
    <property type="evidence" value="ECO:0007669"/>
    <property type="project" value="InterPro"/>
</dbReference>
<dbReference type="GO" id="GO:0007409">
    <property type="term" value="P:axonogenesis"/>
    <property type="evidence" value="ECO:0000318"/>
    <property type="project" value="GO_Central"/>
</dbReference>
<dbReference type="GO" id="GO:0010171">
    <property type="term" value="P:body morphogenesis"/>
    <property type="evidence" value="ECO:0000315"/>
    <property type="project" value="WormBase"/>
</dbReference>
<dbReference type="GO" id="GO:0007417">
    <property type="term" value="P:central nervous system development"/>
    <property type="evidence" value="ECO:0000318"/>
    <property type="project" value="GO_Central"/>
</dbReference>
<dbReference type="GO" id="GO:0042395">
    <property type="term" value="P:ecdysis, collagen and cuticulin-based cuticle"/>
    <property type="evidence" value="ECO:0000315"/>
    <property type="project" value="WormBase"/>
</dbReference>
<dbReference type="GO" id="GO:0002119">
    <property type="term" value="P:nematode larval development"/>
    <property type="evidence" value="ECO:0000315"/>
    <property type="project" value="WormBase"/>
</dbReference>
<dbReference type="FunFam" id="1.20.120.770:FF:000003">
    <property type="entry name" value="Amyloid-beta-like protein"/>
    <property type="match status" value="1"/>
</dbReference>
<dbReference type="Gene3D" id="1.20.120.770">
    <property type="entry name" value="Amyloid precursor protein, E2 domain"/>
    <property type="match status" value="1"/>
</dbReference>
<dbReference type="Gene3D" id="3.30.1490.140">
    <property type="entry name" value="Amyloidogenic glycoprotein, copper-binding domain"/>
    <property type="match status" value="1"/>
</dbReference>
<dbReference type="Gene3D" id="3.90.570.10">
    <property type="entry name" value="Amyloidogenic glycoprotein, heparin-binding domain"/>
    <property type="match status" value="1"/>
</dbReference>
<dbReference type="Gene3D" id="2.30.29.30">
    <property type="entry name" value="Pleckstrin-homology domain (PH domain)/Phosphotyrosine-binding domain (PTB)"/>
    <property type="match status" value="1"/>
</dbReference>
<dbReference type="InterPro" id="IPR036669">
    <property type="entry name" value="Amyloid_Cu-bd_sf"/>
</dbReference>
<dbReference type="InterPro" id="IPR008155">
    <property type="entry name" value="Amyloid_glyco"/>
</dbReference>
<dbReference type="InterPro" id="IPR011178">
    <property type="entry name" value="Amyloid_glyco_Cu-bd"/>
</dbReference>
<dbReference type="InterPro" id="IPR024329">
    <property type="entry name" value="Amyloid_glyco_E2_domain"/>
</dbReference>
<dbReference type="InterPro" id="IPR008154">
    <property type="entry name" value="Amyloid_glyco_extra"/>
</dbReference>
<dbReference type="InterPro" id="IPR015849">
    <property type="entry name" value="Amyloid_glyco_heparin-bd"/>
</dbReference>
<dbReference type="InterPro" id="IPR036454">
    <property type="entry name" value="Amyloid_glyco_heparin-bd_sf"/>
</dbReference>
<dbReference type="InterPro" id="IPR019745">
    <property type="entry name" value="Amyloid_glyco_intracell_CS"/>
</dbReference>
<dbReference type="InterPro" id="IPR019543">
    <property type="entry name" value="APP_amyloid_C"/>
</dbReference>
<dbReference type="InterPro" id="IPR019744">
    <property type="entry name" value="APP_CUBD_CS"/>
</dbReference>
<dbReference type="InterPro" id="IPR036176">
    <property type="entry name" value="E2_sf"/>
</dbReference>
<dbReference type="InterPro" id="IPR011993">
    <property type="entry name" value="PH-like_dom_sf"/>
</dbReference>
<dbReference type="PANTHER" id="PTHR23103">
    <property type="entry name" value="ALZHEIMER'S DISEASE BETA-AMYLOID RELATED"/>
    <property type="match status" value="1"/>
</dbReference>
<dbReference type="PANTHER" id="PTHR23103:SF15">
    <property type="entry name" value="AMYLOID-BETA-LIKE PROTEIN"/>
    <property type="match status" value="1"/>
</dbReference>
<dbReference type="Pfam" id="PF10515">
    <property type="entry name" value="APP_amyloid"/>
    <property type="match status" value="1"/>
</dbReference>
<dbReference type="Pfam" id="PF12924">
    <property type="entry name" value="APP_Cu_bd"/>
    <property type="match status" value="1"/>
</dbReference>
<dbReference type="Pfam" id="PF12925">
    <property type="entry name" value="APP_E2"/>
    <property type="match status" value="1"/>
</dbReference>
<dbReference type="Pfam" id="PF02177">
    <property type="entry name" value="APP_N"/>
    <property type="match status" value="1"/>
</dbReference>
<dbReference type="PRINTS" id="PR00203">
    <property type="entry name" value="AMYLOIDA4"/>
</dbReference>
<dbReference type="SMART" id="SM00006">
    <property type="entry name" value="A4_EXTRA"/>
    <property type="match status" value="1"/>
</dbReference>
<dbReference type="SUPFAM" id="SSF56491">
    <property type="entry name" value="A heparin-binding domain"/>
    <property type="match status" value="1"/>
</dbReference>
<dbReference type="SUPFAM" id="SSF89811">
    <property type="entry name" value="Amyloid beta a4 protein copper binding domain (domain 2)"/>
    <property type="match status" value="1"/>
</dbReference>
<dbReference type="SUPFAM" id="SSF109843">
    <property type="entry name" value="CAPPD, an extracellular domain of amyloid beta A4 protein"/>
    <property type="match status" value="1"/>
</dbReference>
<dbReference type="PROSITE" id="PS00319">
    <property type="entry name" value="APP_CUBD"/>
    <property type="match status" value="1"/>
</dbReference>
<dbReference type="PROSITE" id="PS51869">
    <property type="entry name" value="APP_E1"/>
    <property type="match status" value="1"/>
</dbReference>
<dbReference type="PROSITE" id="PS51870">
    <property type="entry name" value="APP_E2"/>
    <property type="match status" value="1"/>
</dbReference>
<dbReference type="PROSITE" id="PS00320">
    <property type="entry name" value="APP_INTRA"/>
    <property type="match status" value="1"/>
</dbReference>
<sequence length="686" mass="79435">MTVGKLMIGLLIPILVATVYAEGSPAGSKRHEKFIPMVAFSCGYRNQYMTEEGSWKTDDERYATCFSGKLDILKYCRKAYPSMNITNIVEYSHEVSISDWCREEGSPCKWTHSVRPYHCIDGEFHSEALQVPHDCQFSHVNSRDQCNDYQHWKDEAGKQCKTKKSKGNKDMIVRSFAVLEPCALDMFTGVEFVCCPNDQTNKTDVQKTKEDEDDDDDEDDAYEDDYSEESDEKDEEEPSSQDPYFKIANWTNEHDDFKKAEMRMDEKHRKKVDKVMKEWGDLETRYNEQKAKDPKGAEKFKSQMNARFQKTVSSLEEEHKRMRKEIEAVHEERVQAMLNEKKRDATHDYRQALATHVNKPNKHSVLQSLKAYIRAEEKDRMHTLNRYRHLLKADSKEAAAYKPTVIHRLRYIDLRINGTLAMLRDFPDLEKYVRPIAVTYWKDYRDEVSPDISVEDSELTPIIHDDEFSKNAKLDVKAPTTTAKPVKETDNAKVLPTEASDSEEEADEYYEDEDDEQVKKTPDMKKKVKVVDIKPKEIKVTIEEEKKAPKLVETSVQTDDEDDDEDSSSSTSSESDEDEDKNIKELRVDIEPIIDEPASFYRHDKLIQSPEVERSASSVFQPYVLASAMFITAICIIAFAITNARRRRAMRGFIEVDVYTPEERHVAGMQVNGYENPTYSFFDSKA</sequence>
<feature type="signal peptide" evidence="2">
    <location>
        <begin position="1"/>
        <end position="21"/>
    </location>
</feature>
<feature type="chain" id="PRO_0000000201" description="Amyloid-beta-like protein" evidence="15">
    <location>
        <begin position="22"/>
        <end position="686"/>
    </location>
</feature>
<feature type="topological domain" description="Extracellular" evidence="2">
    <location>
        <begin position="22"/>
        <end position="621"/>
    </location>
</feature>
<feature type="transmembrane region" description="Helical" evidence="2">
    <location>
        <begin position="622"/>
        <end position="642"/>
    </location>
</feature>
<feature type="topological domain" description="Cytoplasmic" evidence="2">
    <location>
        <begin position="643"/>
        <end position="686"/>
    </location>
</feature>
<feature type="domain" description="E1" evidence="3">
    <location>
        <begin position="32"/>
        <end position="197"/>
    </location>
</feature>
<feature type="domain" description="E2" evidence="4">
    <location>
        <begin position="240"/>
        <end position="440"/>
    </location>
</feature>
<feature type="region of interest" description="GFLD subdomain" evidence="3">
    <location>
        <begin position="32"/>
        <end position="125"/>
    </location>
</feature>
<feature type="region of interest" description="CuBD subdomain" evidence="3">
    <location>
        <begin position="133"/>
        <end position="197"/>
    </location>
</feature>
<feature type="region of interest" description="Disordered" evidence="5">
    <location>
        <begin position="201"/>
        <end position="245"/>
    </location>
</feature>
<feature type="region of interest" description="Disordered" evidence="5">
    <location>
        <begin position="479"/>
        <end position="526"/>
    </location>
</feature>
<feature type="region of interest" description="Disordered" evidence="5">
    <location>
        <begin position="550"/>
        <end position="585"/>
    </location>
</feature>
<feature type="short sequence motif" description="YENPXY motif" evidence="1">
    <location>
        <begin position="674"/>
        <end position="679"/>
    </location>
</feature>
<feature type="compositionally biased region" description="Acidic residues" evidence="5">
    <location>
        <begin position="211"/>
        <end position="239"/>
    </location>
</feature>
<feature type="compositionally biased region" description="Acidic residues" evidence="5">
    <location>
        <begin position="500"/>
        <end position="516"/>
    </location>
</feature>
<feature type="compositionally biased region" description="Basic and acidic residues" evidence="5">
    <location>
        <begin position="517"/>
        <end position="526"/>
    </location>
</feature>
<feature type="compositionally biased region" description="Acidic residues" evidence="5">
    <location>
        <begin position="558"/>
        <end position="567"/>
    </location>
</feature>
<feature type="binding site" evidence="10">
    <location>
        <begin position="252"/>
        <end position="255"/>
    </location>
    <ligand>
        <name>heparin</name>
        <dbReference type="ChEBI" id="CHEBI:28304"/>
    </ligand>
</feature>
<feature type="binding site" evidence="10">
    <location>
        <position position="382"/>
    </location>
    <ligand>
        <name>heparin</name>
        <dbReference type="ChEBI" id="CHEBI:28304"/>
    </ligand>
</feature>
<feature type="glycosylation site" description="N-linked (GlcNAc...) asparagine" evidence="2">
    <location>
        <position position="84"/>
    </location>
</feature>
<feature type="glycosylation site" description="N-linked (GlcNAc...) asparagine" evidence="2">
    <location>
        <position position="201"/>
    </location>
</feature>
<feature type="glycosylation site" description="N-linked (GlcNAc...) asparagine" evidence="8">
    <location>
        <position position="249"/>
    </location>
</feature>
<feature type="glycosylation site" description="N-linked (GlcNAc...) asparagine" evidence="2">
    <location>
        <position position="417"/>
    </location>
</feature>
<feature type="disulfide bond" evidence="3">
    <location>
        <begin position="42"/>
        <end position="65"/>
    </location>
</feature>
<feature type="disulfide bond" evidence="3">
    <location>
        <begin position="76"/>
        <end position="119"/>
    </location>
</feature>
<feature type="disulfide bond" evidence="3">
    <location>
        <begin position="101"/>
        <end position="108"/>
    </location>
</feature>
<feature type="disulfide bond" evidence="3 10 13">
    <location>
        <begin position="135"/>
        <end position="195"/>
    </location>
</feature>
<feature type="disulfide bond" evidence="3 10 13">
    <location>
        <begin position="146"/>
        <end position="182"/>
    </location>
</feature>
<feature type="disulfide bond" evidence="3 10 13">
    <location>
        <begin position="160"/>
        <end position="194"/>
    </location>
</feature>
<feature type="splice variant" id="VSP_000017" description="In isoform b." evidence="15">
    <location>
        <begin position="538"/>
        <end position="539"/>
    </location>
</feature>
<feature type="mutagenesis site" description="Reduced heparin binding." evidence="10">
    <original>N</original>
    <variation>A</variation>
    <location>
        <position position="252"/>
    </location>
</feature>
<feature type="mutagenesis site" description="Reduced heparin binding." evidence="10">
    <original>H</original>
    <variation>A</variation>
    <location>
        <position position="254"/>
    </location>
</feature>
<feature type="mutagenesis site" description="Reduced heparin binding." evidence="10">
    <original>H</original>
    <variation>P</variation>
    <location>
        <position position="254"/>
    </location>
</feature>
<feature type="mutagenesis site" description="Results in destabilized protein structure; when associated with C-368 and K-377." evidence="10">
    <original>D</original>
    <variation>C</variation>
    <location>
        <position position="348"/>
    </location>
</feature>
<feature type="mutagenesis site" description="Results in destabilized protein structure; when associated with C-348 and K-377." evidence="10">
    <original>S</original>
    <variation>C</variation>
    <location>
        <position position="368"/>
    </location>
</feature>
<feature type="mutagenesis site" description="Reduced heparin binding; when associated with A-378." evidence="10">
    <original>R</original>
    <variation>A</variation>
    <location>
        <position position="374"/>
    </location>
</feature>
<feature type="mutagenesis site" description="In yn32: Results in lethality and destabilized protein structure." evidence="7 10">
    <original>E</original>
    <variation>K</variation>
    <location>
        <position position="377"/>
    </location>
</feature>
<feature type="mutagenesis site" description="Reduced heparin binding; when associated with A-374." evidence="10">
    <original>K</original>
    <variation>A</variation>
    <location>
        <position position="378"/>
    </location>
</feature>
<feature type="mutagenesis site" description="Moderately reduced heparin binding." evidence="10">
    <original>H</original>
    <variation>A</variation>
    <location>
        <position position="382"/>
    </location>
</feature>
<feature type="strand" evidence="17">
    <location>
        <begin position="136"/>
        <end position="141"/>
    </location>
</feature>
<feature type="helix" evidence="17">
    <location>
        <begin position="149"/>
        <end position="162"/>
    </location>
</feature>
<feature type="strand" evidence="17">
    <location>
        <begin position="172"/>
        <end position="178"/>
    </location>
</feature>
<feature type="strand" evidence="17">
    <location>
        <begin position="187"/>
        <end position="195"/>
    </location>
</feature>
<feature type="helix" evidence="18">
    <location>
        <begin position="243"/>
        <end position="246"/>
    </location>
</feature>
<feature type="helix" evidence="18">
    <location>
        <begin position="253"/>
        <end position="292"/>
    </location>
</feature>
<feature type="helix" evidence="18">
    <location>
        <begin position="294"/>
        <end position="358"/>
    </location>
</feature>
<feature type="helix" evidence="18">
    <location>
        <begin position="362"/>
        <end position="393"/>
    </location>
</feature>
<feature type="helix" evidence="18">
    <location>
        <begin position="395"/>
        <end position="399"/>
    </location>
</feature>
<feature type="helix" evidence="18">
    <location>
        <begin position="402"/>
        <end position="421"/>
    </location>
</feature>
<feature type="turn" evidence="18">
    <location>
        <begin position="422"/>
        <end position="425"/>
    </location>
</feature>
<feature type="helix" evidence="18">
    <location>
        <begin position="427"/>
        <end position="430"/>
    </location>
</feature>
<feature type="turn" evidence="19">
    <location>
        <begin position="431"/>
        <end position="433"/>
    </location>
</feature>
<feature type="helix" evidence="18">
    <location>
        <begin position="434"/>
        <end position="448"/>
    </location>
</feature>
<keyword id="KW-0002">3D-structure</keyword>
<keyword id="KW-0025">Alternative splicing</keyword>
<keyword id="KW-0034">Amyloid</keyword>
<keyword id="KW-0217">Developmental protein</keyword>
<keyword id="KW-0221">Differentiation</keyword>
<keyword id="KW-1015">Disulfide bond</keyword>
<keyword id="KW-0967">Endosome</keyword>
<keyword id="KW-0325">Glycoprotein</keyword>
<keyword id="KW-0472">Membrane</keyword>
<keyword id="KW-0524">Neurogenesis</keyword>
<keyword id="KW-1185">Reference proteome</keyword>
<keyword id="KW-0732">Signal</keyword>
<keyword id="KW-0812">Transmembrane</keyword>
<keyword id="KW-1133">Transmembrane helix</keyword>